<accession>Q1BV70</accession>
<sequence>MTAKDVKFRDGARQQIVKGVNVLADAVKVTLGPKGRNVVIERGFGAPVITKDGVSVAKEIELKDRFENMGAQIVKQVASKTADVAGDGTTTATVLAQAIVQEGMKHVAAGMNPMDLKRGIDKAVGAVLDELRKLSRPISTHKEIAQVGAISANSDEAIGKIIADAMEKVGKDGVITVEDGKSLENELDVVEGMQFDRGYVSPYFINDPAKQAAYLDDALILLHDKKISSVRDLLPILEAASKAGKPLLIVAEDVEAEALATLVVNSMRGILKVAAVKAPGFGDRRKAMLEDLAILTGATVISEETGKQLDKATLEDLGSAKRVEVRKDDTIIIDGAGDAARIEARVKSIRVQIDEATSDYDREKLQERVAKLAGGVAVIKVGAVTEVEMKEKKDRVDDALHATRAAVEEGIVPGGGVALLRARAALSDIRGANADQDAGIRIVLRALEAPLRVIAANAGDEPSVVISKVLEGKGNFGYNAATGEYGDLVDAGVVDPTKVTRTALQNAASIASLVLTTDATVAQAPKEESAESAPAPELGY</sequence>
<dbReference type="EC" id="5.6.1.7" evidence="1"/>
<dbReference type="EMBL" id="CP000378">
    <property type="protein sequence ID" value="ABF76485.1"/>
    <property type="molecule type" value="Genomic_DNA"/>
</dbReference>
<dbReference type="SMR" id="Q1BV70"/>
<dbReference type="HOGENOM" id="CLU_016503_3_0_4"/>
<dbReference type="GO" id="GO:0005737">
    <property type="term" value="C:cytoplasm"/>
    <property type="evidence" value="ECO:0007669"/>
    <property type="project" value="UniProtKB-SubCell"/>
</dbReference>
<dbReference type="GO" id="GO:0005524">
    <property type="term" value="F:ATP binding"/>
    <property type="evidence" value="ECO:0007669"/>
    <property type="project" value="UniProtKB-UniRule"/>
</dbReference>
<dbReference type="GO" id="GO:0140662">
    <property type="term" value="F:ATP-dependent protein folding chaperone"/>
    <property type="evidence" value="ECO:0007669"/>
    <property type="project" value="InterPro"/>
</dbReference>
<dbReference type="GO" id="GO:0016853">
    <property type="term" value="F:isomerase activity"/>
    <property type="evidence" value="ECO:0007669"/>
    <property type="project" value="UniProtKB-KW"/>
</dbReference>
<dbReference type="GO" id="GO:0051082">
    <property type="term" value="F:unfolded protein binding"/>
    <property type="evidence" value="ECO:0007669"/>
    <property type="project" value="UniProtKB-UniRule"/>
</dbReference>
<dbReference type="GO" id="GO:0042026">
    <property type="term" value="P:protein refolding"/>
    <property type="evidence" value="ECO:0007669"/>
    <property type="project" value="UniProtKB-UniRule"/>
</dbReference>
<dbReference type="CDD" id="cd03344">
    <property type="entry name" value="GroEL"/>
    <property type="match status" value="1"/>
</dbReference>
<dbReference type="FunFam" id="1.10.560.10:FF:000001">
    <property type="entry name" value="60 kDa chaperonin"/>
    <property type="match status" value="1"/>
</dbReference>
<dbReference type="FunFam" id="3.50.7.10:FF:000001">
    <property type="entry name" value="60 kDa chaperonin"/>
    <property type="match status" value="1"/>
</dbReference>
<dbReference type="Gene3D" id="3.50.7.10">
    <property type="entry name" value="GroEL"/>
    <property type="match status" value="1"/>
</dbReference>
<dbReference type="Gene3D" id="1.10.560.10">
    <property type="entry name" value="GroEL-like equatorial domain"/>
    <property type="match status" value="1"/>
</dbReference>
<dbReference type="Gene3D" id="3.30.260.10">
    <property type="entry name" value="TCP-1-like chaperonin intermediate domain"/>
    <property type="match status" value="1"/>
</dbReference>
<dbReference type="HAMAP" id="MF_00600">
    <property type="entry name" value="CH60"/>
    <property type="match status" value="1"/>
</dbReference>
<dbReference type="InterPro" id="IPR018370">
    <property type="entry name" value="Chaperonin_Cpn60_CS"/>
</dbReference>
<dbReference type="InterPro" id="IPR001844">
    <property type="entry name" value="Cpn60/GroEL"/>
</dbReference>
<dbReference type="InterPro" id="IPR002423">
    <property type="entry name" value="Cpn60/GroEL/TCP-1"/>
</dbReference>
<dbReference type="InterPro" id="IPR027409">
    <property type="entry name" value="GroEL-like_apical_dom_sf"/>
</dbReference>
<dbReference type="InterPro" id="IPR027413">
    <property type="entry name" value="GROEL-like_equatorial_sf"/>
</dbReference>
<dbReference type="InterPro" id="IPR027410">
    <property type="entry name" value="TCP-1-like_intermed_sf"/>
</dbReference>
<dbReference type="NCBIfam" id="TIGR02348">
    <property type="entry name" value="GroEL"/>
    <property type="match status" value="1"/>
</dbReference>
<dbReference type="NCBIfam" id="NF000592">
    <property type="entry name" value="PRK00013.1"/>
    <property type="match status" value="1"/>
</dbReference>
<dbReference type="NCBIfam" id="NF009487">
    <property type="entry name" value="PRK12849.1"/>
    <property type="match status" value="1"/>
</dbReference>
<dbReference type="NCBIfam" id="NF009488">
    <property type="entry name" value="PRK12850.1"/>
    <property type="match status" value="1"/>
</dbReference>
<dbReference type="NCBIfam" id="NF009489">
    <property type="entry name" value="PRK12851.1"/>
    <property type="match status" value="1"/>
</dbReference>
<dbReference type="PANTHER" id="PTHR45633">
    <property type="entry name" value="60 KDA HEAT SHOCK PROTEIN, MITOCHONDRIAL"/>
    <property type="match status" value="1"/>
</dbReference>
<dbReference type="Pfam" id="PF00118">
    <property type="entry name" value="Cpn60_TCP1"/>
    <property type="match status" value="1"/>
</dbReference>
<dbReference type="PRINTS" id="PR00298">
    <property type="entry name" value="CHAPERONIN60"/>
</dbReference>
<dbReference type="SUPFAM" id="SSF52029">
    <property type="entry name" value="GroEL apical domain-like"/>
    <property type="match status" value="1"/>
</dbReference>
<dbReference type="SUPFAM" id="SSF48592">
    <property type="entry name" value="GroEL equatorial domain-like"/>
    <property type="match status" value="1"/>
</dbReference>
<dbReference type="SUPFAM" id="SSF54849">
    <property type="entry name" value="GroEL-intermediate domain like"/>
    <property type="match status" value="1"/>
</dbReference>
<dbReference type="PROSITE" id="PS00296">
    <property type="entry name" value="CHAPERONINS_CPN60"/>
    <property type="match status" value="1"/>
</dbReference>
<comment type="function">
    <text evidence="1">Together with its co-chaperonin GroES, plays an essential role in assisting protein folding. The GroEL-GroES system forms a nano-cage that allows encapsulation of the non-native substrate proteins and provides a physical environment optimized to promote and accelerate protein folding.</text>
</comment>
<comment type="catalytic activity">
    <reaction evidence="1">
        <text>ATP + H2O + a folded polypeptide = ADP + phosphate + an unfolded polypeptide.</text>
        <dbReference type="EC" id="5.6.1.7"/>
    </reaction>
</comment>
<comment type="subunit">
    <text evidence="1">Forms a cylinder of 14 subunits composed of two heptameric rings stacked back-to-back. Interacts with the co-chaperonin GroES.</text>
</comment>
<comment type="subcellular location">
    <subcellularLocation>
        <location evidence="1">Cytoplasm</location>
    </subcellularLocation>
</comment>
<comment type="similarity">
    <text evidence="1">Belongs to the chaperonin (HSP60) family.</text>
</comment>
<feature type="chain" id="PRO_0000256880" description="Chaperonin GroEL 2">
    <location>
        <begin position="1"/>
        <end position="540"/>
    </location>
</feature>
<feature type="binding site" evidence="1">
    <location>
        <begin position="30"/>
        <end position="33"/>
    </location>
    <ligand>
        <name>ATP</name>
        <dbReference type="ChEBI" id="CHEBI:30616"/>
    </ligand>
</feature>
<feature type="binding site" evidence="1">
    <location>
        <position position="51"/>
    </location>
    <ligand>
        <name>ATP</name>
        <dbReference type="ChEBI" id="CHEBI:30616"/>
    </ligand>
</feature>
<feature type="binding site" evidence="1">
    <location>
        <begin position="87"/>
        <end position="91"/>
    </location>
    <ligand>
        <name>ATP</name>
        <dbReference type="ChEBI" id="CHEBI:30616"/>
    </ligand>
</feature>
<feature type="binding site" evidence="1">
    <location>
        <position position="415"/>
    </location>
    <ligand>
        <name>ATP</name>
        <dbReference type="ChEBI" id="CHEBI:30616"/>
    </ligand>
</feature>
<feature type="binding site" evidence="1">
    <location>
        <begin position="479"/>
        <end position="481"/>
    </location>
    <ligand>
        <name>ATP</name>
        <dbReference type="ChEBI" id="CHEBI:30616"/>
    </ligand>
</feature>
<feature type="binding site" evidence="1">
    <location>
        <position position="495"/>
    </location>
    <ligand>
        <name>ATP</name>
        <dbReference type="ChEBI" id="CHEBI:30616"/>
    </ligand>
</feature>
<name>CH602_BURO1</name>
<keyword id="KW-0067">ATP-binding</keyword>
<keyword id="KW-0143">Chaperone</keyword>
<keyword id="KW-0963">Cytoplasm</keyword>
<keyword id="KW-0413">Isomerase</keyword>
<keyword id="KW-0547">Nucleotide-binding</keyword>
<evidence type="ECO:0000255" key="1">
    <source>
        <dbReference type="HAMAP-Rule" id="MF_00600"/>
    </source>
</evidence>
<protein>
    <recommendedName>
        <fullName evidence="1">Chaperonin GroEL 2</fullName>
        <ecNumber evidence="1">5.6.1.7</ecNumber>
    </recommendedName>
    <alternativeName>
        <fullName evidence="1">60 kDa chaperonin 2</fullName>
    </alternativeName>
    <alternativeName>
        <fullName evidence="1">Chaperonin-60 2</fullName>
        <shortName evidence="1">Cpn60 2</shortName>
    </alternativeName>
</protein>
<gene>
    <name evidence="1" type="primary">groEL2</name>
    <name evidence="1" type="synonym">groL2</name>
    <name type="ordered locus">Bcen_1580</name>
</gene>
<reference key="1">
    <citation type="submission" date="2006-05" db="EMBL/GenBank/DDBJ databases">
        <title>Complete sequence of chromosome 1 of Burkholderia cenocepacia AU 1054.</title>
        <authorList>
            <consortium name="US DOE Joint Genome Institute"/>
            <person name="Copeland A."/>
            <person name="Lucas S."/>
            <person name="Lapidus A."/>
            <person name="Barry K."/>
            <person name="Detter J.C."/>
            <person name="Glavina del Rio T."/>
            <person name="Hammon N."/>
            <person name="Israni S."/>
            <person name="Dalin E."/>
            <person name="Tice H."/>
            <person name="Pitluck S."/>
            <person name="Chain P."/>
            <person name="Malfatti S."/>
            <person name="Shin M."/>
            <person name="Vergez L."/>
            <person name="Schmutz J."/>
            <person name="Larimer F."/>
            <person name="Land M."/>
            <person name="Hauser L."/>
            <person name="Kyrpides N."/>
            <person name="Lykidis A."/>
            <person name="LiPuma J.J."/>
            <person name="Konstantinidis K."/>
            <person name="Tiedje J.M."/>
            <person name="Richardson P."/>
        </authorList>
    </citation>
    <scope>NUCLEOTIDE SEQUENCE [LARGE SCALE GENOMIC DNA]</scope>
    <source>
        <strain>AU 1054</strain>
    </source>
</reference>
<proteinExistence type="inferred from homology"/>
<organism>
    <name type="scientific">Burkholderia orbicola (strain AU 1054)</name>
    <dbReference type="NCBI Taxonomy" id="331271"/>
    <lineage>
        <taxon>Bacteria</taxon>
        <taxon>Pseudomonadati</taxon>
        <taxon>Pseudomonadota</taxon>
        <taxon>Betaproteobacteria</taxon>
        <taxon>Burkholderiales</taxon>
        <taxon>Burkholderiaceae</taxon>
        <taxon>Burkholderia</taxon>
        <taxon>Burkholderia cepacia complex</taxon>
        <taxon>Burkholderia orbicola</taxon>
    </lineage>
</organism>